<dbReference type="EMBL" id="CP001157">
    <property type="protein sequence ID" value="ACO77704.1"/>
    <property type="molecule type" value="Genomic_DNA"/>
</dbReference>
<dbReference type="RefSeq" id="WP_007160601.1">
    <property type="nucleotide sequence ID" value="NZ_CP144736.1"/>
</dbReference>
<dbReference type="SMR" id="C1DR31"/>
<dbReference type="STRING" id="322710.Avin_14890"/>
<dbReference type="EnsemblBacteria" id="ACO77704">
    <property type="protein sequence ID" value="ACO77704"/>
    <property type="gene ID" value="Avin_14890"/>
</dbReference>
<dbReference type="GeneID" id="88184786"/>
<dbReference type="KEGG" id="avn:Avin_14890"/>
<dbReference type="eggNOG" id="COG0333">
    <property type="taxonomic scope" value="Bacteria"/>
</dbReference>
<dbReference type="HOGENOM" id="CLU_129084_2_1_6"/>
<dbReference type="OrthoDB" id="9801927at2"/>
<dbReference type="Proteomes" id="UP000002424">
    <property type="component" value="Chromosome"/>
</dbReference>
<dbReference type="GO" id="GO:0015934">
    <property type="term" value="C:large ribosomal subunit"/>
    <property type="evidence" value="ECO:0007669"/>
    <property type="project" value="InterPro"/>
</dbReference>
<dbReference type="GO" id="GO:0003735">
    <property type="term" value="F:structural constituent of ribosome"/>
    <property type="evidence" value="ECO:0007669"/>
    <property type="project" value="InterPro"/>
</dbReference>
<dbReference type="GO" id="GO:0006412">
    <property type="term" value="P:translation"/>
    <property type="evidence" value="ECO:0007669"/>
    <property type="project" value="UniProtKB-UniRule"/>
</dbReference>
<dbReference type="HAMAP" id="MF_00340">
    <property type="entry name" value="Ribosomal_bL32"/>
    <property type="match status" value="1"/>
</dbReference>
<dbReference type="InterPro" id="IPR002677">
    <property type="entry name" value="Ribosomal_bL32"/>
</dbReference>
<dbReference type="InterPro" id="IPR044957">
    <property type="entry name" value="Ribosomal_bL32_bact"/>
</dbReference>
<dbReference type="InterPro" id="IPR011332">
    <property type="entry name" value="Ribosomal_zn-bd"/>
</dbReference>
<dbReference type="NCBIfam" id="TIGR01031">
    <property type="entry name" value="rpmF_bact"/>
    <property type="match status" value="1"/>
</dbReference>
<dbReference type="PANTHER" id="PTHR35534">
    <property type="entry name" value="50S RIBOSOMAL PROTEIN L32"/>
    <property type="match status" value="1"/>
</dbReference>
<dbReference type="PANTHER" id="PTHR35534:SF1">
    <property type="entry name" value="LARGE RIBOSOMAL SUBUNIT PROTEIN BL32"/>
    <property type="match status" value="1"/>
</dbReference>
<dbReference type="Pfam" id="PF01783">
    <property type="entry name" value="Ribosomal_L32p"/>
    <property type="match status" value="1"/>
</dbReference>
<dbReference type="SUPFAM" id="SSF57829">
    <property type="entry name" value="Zn-binding ribosomal proteins"/>
    <property type="match status" value="1"/>
</dbReference>
<comment type="similarity">
    <text evidence="1">Belongs to the bacterial ribosomal protein bL32 family.</text>
</comment>
<evidence type="ECO:0000255" key="1">
    <source>
        <dbReference type="HAMAP-Rule" id="MF_00340"/>
    </source>
</evidence>
<evidence type="ECO:0000305" key="2"/>
<protein>
    <recommendedName>
        <fullName evidence="1">Large ribosomal subunit protein bL32</fullName>
    </recommendedName>
    <alternativeName>
        <fullName evidence="2">50S ribosomal protein L32</fullName>
    </alternativeName>
</protein>
<gene>
    <name evidence="1" type="primary">rpmF</name>
    <name type="ordered locus">Avin_14890</name>
</gene>
<keyword id="KW-0687">Ribonucleoprotein</keyword>
<keyword id="KW-0689">Ribosomal protein</keyword>
<reference key="1">
    <citation type="journal article" date="2009" name="J. Bacteriol.">
        <title>Genome sequence of Azotobacter vinelandii, an obligate aerobe specialized to support diverse anaerobic metabolic processes.</title>
        <authorList>
            <person name="Setubal J.C."/>
            <person name="Dos Santos P."/>
            <person name="Goldman B.S."/>
            <person name="Ertesvaag H."/>
            <person name="Espin G."/>
            <person name="Rubio L.M."/>
            <person name="Valla S."/>
            <person name="Almeida N.F."/>
            <person name="Balasubramanian D."/>
            <person name="Cromes L."/>
            <person name="Curatti L."/>
            <person name="Du Z."/>
            <person name="Godsy E."/>
            <person name="Goodner B."/>
            <person name="Hellner-Burris K."/>
            <person name="Hernandez J.A."/>
            <person name="Houmiel K."/>
            <person name="Imperial J."/>
            <person name="Kennedy C."/>
            <person name="Larson T.J."/>
            <person name="Latreille P."/>
            <person name="Ligon L.S."/>
            <person name="Lu J."/>
            <person name="Maerk M."/>
            <person name="Miller N.M."/>
            <person name="Norton S."/>
            <person name="O'Carroll I.P."/>
            <person name="Paulsen I."/>
            <person name="Raulfs E.C."/>
            <person name="Roemer R."/>
            <person name="Rosser J."/>
            <person name="Segura D."/>
            <person name="Slater S."/>
            <person name="Stricklin S.L."/>
            <person name="Studholme D.J."/>
            <person name="Sun J."/>
            <person name="Viana C.J."/>
            <person name="Wallin E."/>
            <person name="Wang B."/>
            <person name="Wheeler C."/>
            <person name="Zhu H."/>
            <person name="Dean D.R."/>
            <person name="Dixon R."/>
            <person name="Wood D."/>
        </authorList>
    </citation>
    <scope>NUCLEOTIDE SEQUENCE [LARGE SCALE GENOMIC DNA]</scope>
    <source>
        <strain>DJ / ATCC BAA-1303</strain>
    </source>
</reference>
<feature type="chain" id="PRO_1000205254" description="Large ribosomal subunit protein bL32">
    <location>
        <begin position="1"/>
        <end position="60"/>
    </location>
</feature>
<proteinExistence type="inferred from homology"/>
<name>RL32_AZOVD</name>
<accession>C1DR31</accession>
<organism>
    <name type="scientific">Azotobacter vinelandii (strain DJ / ATCC BAA-1303)</name>
    <dbReference type="NCBI Taxonomy" id="322710"/>
    <lineage>
        <taxon>Bacteria</taxon>
        <taxon>Pseudomonadati</taxon>
        <taxon>Pseudomonadota</taxon>
        <taxon>Gammaproteobacteria</taxon>
        <taxon>Pseudomonadales</taxon>
        <taxon>Pseudomonadaceae</taxon>
        <taxon>Azotobacter</taxon>
    </lineage>
</organism>
<sequence>MAVQQNKKSRSARDMRRSHDALEANALSVEKSTGEVHLRHHVSPDGFYRGRKVIDKGSDE</sequence>